<comment type="function">
    <molecule>Ubiquitin-like protein</molecule>
    <text evidence="1">Involved in the ATP-dependent selective degradation of cellular proteins, the maintenance of chromatin structure, the regulation of gene expression, the stress response, and ribosome biogenesis.</text>
</comment>
<comment type="function">
    <molecule>NEDD8-like protein RUB3</molecule>
    <text>Appears to function as a stable post-translational protein modifier.</text>
</comment>
<comment type="subcellular location">
    <molecule>Ubiquitin-like protein</molecule>
    <subcellularLocation>
        <location evidence="1">Cytoplasm</location>
    </subcellularLocation>
    <subcellularLocation>
        <location evidence="1">Nucleus</location>
    </subcellularLocation>
</comment>
<comment type="miscellaneous">
    <text>Synthesized as a precursor protein containing a N-terminal ubiquitin-like protein fused to the ubiquitin-related protein.</text>
</comment>
<comment type="similarity">
    <text evidence="3">Belongs to the ubiquitin family.</text>
</comment>
<dbReference type="EMBL" id="AP003725">
    <property type="protein sequence ID" value="BAB90457.1"/>
    <property type="molecule type" value="Genomic_DNA"/>
</dbReference>
<dbReference type="EMBL" id="AP003855">
    <property type="protein sequence ID" value="BAB92795.1"/>
    <property type="molecule type" value="Genomic_DNA"/>
</dbReference>
<dbReference type="EMBL" id="AP014957">
    <property type="status" value="NOT_ANNOTATED_CDS"/>
    <property type="molecule type" value="Genomic_DNA"/>
</dbReference>
<dbReference type="SMR" id="P0C032"/>
<dbReference type="FunCoup" id="P0C032">
    <property type="interactions" value="17"/>
</dbReference>
<dbReference type="STRING" id="39947.P0C032"/>
<dbReference type="PaxDb" id="39947-P0C032"/>
<dbReference type="InParanoid" id="P0C032"/>
<dbReference type="Proteomes" id="UP000000763">
    <property type="component" value="Chromosome 1"/>
</dbReference>
<dbReference type="Proteomes" id="UP000059680">
    <property type="component" value="Chromosome 1"/>
</dbReference>
<dbReference type="GO" id="GO:0005737">
    <property type="term" value="C:cytoplasm"/>
    <property type="evidence" value="ECO:0000318"/>
    <property type="project" value="GO_Central"/>
</dbReference>
<dbReference type="GO" id="GO:0005634">
    <property type="term" value="C:nucleus"/>
    <property type="evidence" value="ECO:0000318"/>
    <property type="project" value="GO_Central"/>
</dbReference>
<dbReference type="GO" id="GO:0003729">
    <property type="term" value="F:mRNA binding"/>
    <property type="evidence" value="ECO:0007669"/>
    <property type="project" value="UniProtKB-ARBA"/>
</dbReference>
<dbReference type="GO" id="GO:0031386">
    <property type="term" value="F:protein tag activity"/>
    <property type="evidence" value="ECO:0000318"/>
    <property type="project" value="GO_Central"/>
</dbReference>
<dbReference type="GO" id="GO:0031625">
    <property type="term" value="F:ubiquitin protein ligase binding"/>
    <property type="evidence" value="ECO:0000318"/>
    <property type="project" value="GO_Central"/>
</dbReference>
<dbReference type="GO" id="GO:0019941">
    <property type="term" value="P:modification-dependent protein catabolic process"/>
    <property type="evidence" value="ECO:0000318"/>
    <property type="project" value="GO_Central"/>
</dbReference>
<dbReference type="GO" id="GO:0016567">
    <property type="term" value="P:protein ubiquitination"/>
    <property type="evidence" value="ECO:0000318"/>
    <property type="project" value="GO_Central"/>
</dbReference>
<dbReference type="CDD" id="cd01806">
    <property type="entry name" value="Ubl_NEDD8"/>
    <property type="match status" value="1"/>
</dbReference>
<dbReference type="CDD" id="cd01803">
    <property type="entry name" value="Ubl_ubiquitin"/>
    <property type="match status" value="1"/>
</dbReference>
<dbReference type="FunFam" id="3.10.20.90:FF:000023">
    <property type="entry name" value="NEDD8 protein"/>
    <property type="match status" value="1"/>
</dbReference>
<dbReference type="FunFam" id="3.10.20.90:FF:000016">
    <property type="entry name" value="Polyubiquitin 3"/>
    <property type="match status" value="1"/>
</dbReference>
<dbReference type="Gene3D" id="3.10.20.90">
    <property type="entry name" value="Phosphatidylinositol 3-kinase Catalytic Subunit, Chain A, domain 1"/>
    <property type="match status" value="2"/>
</dbReference>
<dbReference type="InterPro" id="IPR038738">
    <property type="entry name" value="Nedd8-like"/>
</dbReference>
<dbReference type="InterPro" id="IPR000626">
    <property type="entry name" value="Ubiquitin-like_dom"/>
</dbReference>
<dbReference type="InterPro" id="IPR029071">
    <property type="entry name" value="Ubiquitin-like_domsf"/>
</dbReference>
<dbReference type="InterPro" id="IPR019954">
    <property type="entry name" value="Ubiquitin_CS"/>
</dbReference>
<dbReference type="InterPro" id="IPR019956">
    <property type="entry name" value="Ubiquitin_dom"/>
</dbReference>
<dbReference type="InterPro" id="IPR050158">
    <property type="entry name" value="Ubiquitin_ubiquitin-like"/>
</dbReference>
<dbReference type="PANTHER" id="PTHR10666">
    <property type="entry name" value="UBIQUITIN"/>
    <property type="match status" value="1"/>
</dbReference>
<dbReference type="Pfam" id="PF00240">
    <property type="entry name" value="ubiquitin"/>
    <property type="match status" value="2"/>
</dbReference>
<dbReference type="PRINTS" id="PR00348">
    <property type="entry name" value="UBIQUITIN"/>
</dbReference>
<dbReference type="SMART" id="SM00213">
    <property type="entry name" value="UBQ"/>
    <property type="match status" value="2"/>
</dbReference>
<dbReference type="SUPFAM" id="SSF54236">
    <property type="entry name" value="Ubiquitin-like"/>
    <property type="match status" value="2"/>
</dbReference>
<dbReference type="PROSITE" id="PS00299">
    <property type="entry name" value="UBIQUITIN_1"/>
    <property type="match status" value="2"/>
</dbReference>
<dbReference type="PROSITE" id="PS50053">
    <property type="entry name" value="UBIQUITIN_2"/>
    <property type="match status" value="2"/>
</dbReference>
<protein>
    <recommendedName>
        <fullName>Ubiquitin-like protein-NEDD8-like protein RUB3</fullName>
    </recommendedName>
    <component>
        <recommendedName>
            <fullName>Ubiquitin-like protein</fullName>
        </recommendedName>
    </component>
    <component>
        <recommendedName>
            <fullName>NEDD8-like protein RUB3</fullName>
        </recommendedName>
        <alternativeName>
            <fullName>OsRUB3</fullName>
        </alternativeName>
        <alternativeName>
            <fullName>Ubiquitin-related protein 3</fullName>
        </alternativeName>
    </component>
</protein>
<reference key="1">
    <citation type="journal article" date="2002" name="Nature">
        <title>The genome sequence and structure of rice chromosome 1.</title>
        <authorList>
            <person name="Sasaki T."/>
            <person name="Matsumoto T."/>
            <person name="Yamamoto K."/>
            <person name="Sakata K."/>
            <person name="Baba T."/>
            <person name="Katayose Y."/>
            <person name="Wu J."/>
            <person name="Niimura Y."/>
            <person name="Cheng Z."/>
            <person name="Nagamura Y."/>
            <person name="Antonio B.A."/>
            <person name="Kanamori H."/>
            <person name="Hosokawa S."/>
            <person name="Masukawa M."/>
            <person name="Arikawa K."/>
            <person name="Chiden Y."/>
            <person name="Hayashi M."/>
            <person name="Okamoto M."/>
            <person name="Ando T."/>
            <person name="Aoki H."/>
            <person name="Arita K."/>
            <person name="Hamada M."/>
            <person name="Harada C."/>
            <person name="Hijishita S."/>
            <person name="Honda M."/>
            <person name="Ichikawa Y."/>
            <person name="Idonuma A."/>
            <person name="Iijima M."/>
            <person name="Ikeda M."/>
            <person name="Ikeno M."/>
            <person name="Ito S."/>
            <person name="Ito T."/>
            <person name="Ito Y."/>
            <person name="Ito Y."/>
            <person name="Iwabuchi A."/>
            <person name="Kamiya K."/>
            <person name="Karasawa W."/>
            <person name="Katagiri S."/>
            <person name="Kikuta A."/>
            <person name="Kobayashi N."/>
            <person name="Kono I."/>
            <person name="Machita K."/>
            <person name="Maehara T."/>
            <person name="Mizuno H."/>
            <person name="Mizubayashi T."/>
            <person name="Mukai Y."/>
            <person name="Nagasaki H."/>
            <person name="Nakashima M."/>
            <person name="Nakama Y."/>
            <person name="Nakamichi Y."/>
            <person name="Nakamura M."/>
            <person name="Namiki N."/>
            <person name="Negishi M."/>
            <person name="Ohta I."/>
            <person name="Ono N."/>
            <person name="Saji S."/>
            <person name="Sakai K."/>
            <person name="Shibata M."/>
            <person name="Shimokawa T."/>
            <person name="Shomura A."/>
            <person name="Song J."/>
            <person name="Takazaki Y."/>
            <person name="Terasawa K."/>
            <person name="Tsuji K."/>
            <person name="Waki K."/>
            <person name="Yamagata H."/>
            <person name="Yamane H."/>
            <person name="Yoshiki S."/>
            <person name="Yoshihara R."/>
            <person name="Yukawa K."/>
            <person name="Zhong H."/>
            <person name="Iwama H."/>
            <person name="Endo T."/>
            <person name="Ito H."/>
            <person name="Hahn J.H."/>
            <person name="Kim H.-I."/>
            <person name="Eun M.-Y."/>
            <person name="Yano M."/>
            <person name="Jiang J."/>
            <person name="Gojobori T."/>
        </authorList>
    </citation>
    <scope>NUCLEOTIDE SEQUENCE [LARGE SCALE GENOMIC DNA]</scope>
    <source>
        <strain>cv. Nipponbare</strain>
    </source>
</reference>
<reference key="2">
    <citation type="journal article" date="2005" name="Nature">
        <title>The map-based sequence of the rice genome.</title>
        <authorList>
            <consortium name="International rice genome sequencing project (IRGSP)"/>
        </authorList>
    </citation>
    <scope>NUCLEOTIDE SEQUENCE [LARGE SCALE GENOMIC DNA]</scope>
    <source>
        <strain>cv. Nipponbare</strain>
    </source>
</reference>
<reference key="3">
    <citation type="journal article" date="2013" name="Rice">
        <title>Improvement of the Oryza sativa Nipponbare reference genome using next generation sequence and optical map data.</title>
        <authorList>
            <person name="Kawahara Y."/>
            <person name="de la Bastide M."/>
            <person name="Hamilton J.P."/>
            <person name="Kanamori H."/>
            <person name="McCombie W.R."/>
            <person name="Ouyang S."/>
            <person name="Schwartz D.C."/>
            <person name="Tanaka T."/>
            <person name="Wu J."/>
            <person name="Zhou S."/>
            <person name="Childs K.L."/>
            <person name="Davidson R.M."/>
            <person name="Lin H."/>
            <person name="Quesada-Ocampo L."/>
            <person name="Vaillancourt B."/>
            <person name="Sakai H."/>
            <person name="Lee S.S."/>
            <person name="Kim J."/>
            <person name="Numa H."/>
            <person name="Itoh T."/>
            <person name="Buell C.R."/>
            <person name="Matsumoto T."/>
        </authorList>
    </citation>
    <scope>GENOME REANNOTATION</scope>
    <source>
        <strain>cv. Nipponbare</strain>
    </source>
</reference>
<name>RUB3_ORYSJ</name>
<sequence>MQIFVKTLTGKTITLEVESSDTIQNVKAKVQDKEGIPPDQQRLIFAGKQLEDGRTLADYNIQKESTLHLVLRLRGGLNVKVRTLTGKEIDIDIEMTDTVDRIKERVEEREGIPPVQQRLIYGGKQLADDKTAHDYKIEAGSVLHLVLALRGGNF</sequence>
<keyword id="KW-0963">Cytoplasm</keyword>
<keyword id="KW-1017">Isopeptide bond</keyword>
<keyword id="KW-0539">Nucleus</keyword>
<keyword id="KW-1185">Reference proteome</keyword>
<keyword id="KW-0677">Repeat</keyword>
<keyword id="KW-0832">Ubl conjugation</keyword>
<keyword id="KW-0833">Ubl conjugation pathway</keyword>
<organism>
    <name type="scientific">Oryza sativa subsp. japonica</name>
    <name type="common">Rice</name>
    <dbReference type="NCBI Taxonomy" id="39947"/>
    <lineage>
        <taxon>Eukaryota</taxon>
        <taxon>Viridiplantae</taxon>
        <taxon>Streptophyta</taxon>
        <taxon>Embryophyta</taxon>
        <taxon>Tracheophyta</taxon>
        <taxon>Spermatophyta</taxon>
        <taxon>Magnoliopsida</taxon>
        <taxon>Liliopsida</taxon>
        <taxon>Poales</taxon>
        <taxon>Poaceae</taxon>
        <taxon>BOP clade</taxon>
        <taxon>Oryzoideae</taxon>
        <taxon>Oryzeae</taxon>
        <taxon>Oryzinae</taxon>
        <taxon>Oryza</taxon>
        <taxon>Oryza sativa</taxon>
    </lineage>
</organism>
<accession>P0C032</accession>
<accession>P0C033</accession>
<accession>Q8RZF1</accession>
<evidence type="ECO:0000250" key="1"/>
<evidence type="ECO:0000255" key="2">
    <source>
        <dbReference type="PROSITE-ProRule" id="PRU00214"/>
    </source>
</evidence>
<evidence type="ECO:0000305" key="3"/>
<proteinExistence type="inferred from homology"/>
<gene>
    <name type="primary">RUB3</name>
    <name type="synonym">NEDD8</name>
    <name type="synonym">UBL1</name>
    <name type="ordered locus">Os01g0641600</name>
    <name type="ordered locus">LOC_Os01g45400</name>
    <name type="ORF">P0039G05.16</name>
    <name type="ORF">P0510C12.1</name>
</gene>
<feature type="chain" id="PRO_0000114896" description="Ubiquitin-like protein">
    <location>
        <begin position="1"/>
        <end position="76"/>
    </location>
</feature>
<feature type="chain" id="PRO_0000035977" description="NEDD8-like protein RUB3">
    <location>
        <begin position="77"/>
        <end position="152"/>
    </location>
</feature>
<feature type="propeptide" id="PRO_0000035978" evidence="3">
    <location>
        <begin position="153"/>
        <end position="154"/>
    </location>
</feature>
<feature type="domain" description="Ubiquitin-like 1" evidence="2">
    <location>
        <begin position="1"/>
        <end position="76"/>
    </location>
</feature>
<feature type="domain" description="Ubiquitin-like 2" evidence="2">
    <location>
        <begin position="77"/>
        <end position="152"/>
    </location>
</feature>
<feature type="cross-link" description="Glycyl lysine isopeptide (Lys-Gly) (interchain with G-Cter in ubiquitin)" evidence="1">
    <location>
        <position position="48"/>
    </location>
</feature>
<feature type="cross-link" description="Glycyl lysine isopeptide (Gly-Lys) (interchain with K-? in acceptor proteins)" evidence="2">
    <location>
        <position position="76"/>
    </location>
</feature>
<feature type="cross-link" description="Glycyl lysine isopeptide (Gly-Lys) (interchain with K-? in acceptor proteins)" evidence="2">
    <location>
        <position position="152"/>
    </location>
</feature>